<feature type="signal peptide" evidence="1">
    <location>
        <begin position="1"/>
        <end position="19"/>
    </location>
</feature>
<feature type="chain" id="PRO_0000442239" description="Alpha-toxin CvIV4" evidence="6">
    <location>
        <begin position="20"/>
        <end position="83"/>
    </location>
</feature>
<feature type="domain" description="LCN-type CS-alpha/beta" evidence="2">
    <location>
        <begin position="21"/>
        <end position="79"/>
    </location>
</feature>
<feature type="disulfide bond" evidence="2">
    <location>
        <begin position="31"/>
        <end position="78"/>
    </location>
</feature>
<feature type="disulfide bond" evidence="2">
    <location>
        <begin position="35"/>
        <end position="55"/>
    </location>
</feature>
<feature type="disulfide bond" evidence="2">
    <location>
        <begin position="41"/>
        <end position="61"/>
    </location>
</feature>
<feature type="disulfide bond" evidence="2">
    <location>
        <begin position="45"/>
        <end position="63"/>
    </location>
</feature>
<reference key="1">
    <citation type="journal article" date="2011" name="PLoS ONE">
        <title>Isolation and characterization of CvIV4: a pain inducing alpha-scorpion toxin.</title>
        <authorList>
            <person name="Rowe A.H."/>
            <person name="Xiao Y."/>
            <person name="Scales J."/>
            <person name="Linse K.D."/>
            <person name="Rowe M.P."/>
            <person name="Cummins T.R."/>
            <person name="Zakon H.H."/>
        </authorList>
    </citation>
    <scope>NUCLEOTIDE SEQUENCE [MRNA]</scope>
    <scope>PROTEIN SEQUENCE OF 20-59</scope>
    <scope>FUNCTION</scope>
    <scope>BIOASSAY</scope>
    <scope>SUBUNIT</scope>
    <scope>MASS SPECTROMETRY</scope>
    <source>
        <tissue>Venom</tissue>
        <tissue>Venom gland</tissue>
    </source>
</reference>
<keyword id="KW-0903">Direct protein sequencing</keyword>
<keyword id="KW-1015">Disulfide bond</keyword>
<keyword id="KW-0872">Ion channel impairing toxin</keyword>
<keyword id="KW-0528">Neurotoxin</keyword>
<keyword id="KW-0964">Secreted</keyword>
<keyword id="KW-0732">Signal</keyword>
<keyword id="KW-0800">Toxin</keyword>
<keyword id="KW-0738">Voltage-gated sodium channel impairing toxin</keyword>
<protein>
    <recommendedName>
        <fullName evidence="4">Alpha-toxin CvIV4</fullName>
    </recommendedName>
</protein>
<dbReference type="EMBL" id="JF938594">
    <property type="protein sequence ID" value="AEI61921.1"/>
    <property type="status" value="ALT_INIT"/>
    <property type="molecule type" value="mRNA"/>
</dbReference>
<dbReference type="SMR" id="F8UWP3"/>
<dbReference type="TCDB" id="8.B.1.1.6">
    <property type="family name" value="the long (4c-c) scorpion toxin (l-st) superfamily"/>
</dbReference>
<dbReference type="GO" id="GO:0005576">
    <property type="term" value="C:extracellular region"/>
    <property type="evidence" value="ECO:0007669"/>
    <property type="project" value="UniProtKB-SubCell"/>
</dbReference>
<dbReference type="GO" id="GO:0019871">
    <property type="term" value="F:sodium channel inhibitor activity"/>
    <property type="evidence" value="ECO:0007669"/>
    <property type="project" value="InterPro"/>
</dbReference>
<dbReference type="GO" id="GO:0090729">
    <property type="term" value="F:toxin activity"/>
    <property type="evidence" value="ECO:0007669"/>
    <property type="project" value="UniProtKB-KW"/>
</dbReference>
<dbReference type="GO" id="GO:0006952">
    <property type="term" value="P:defense response"/>
    <property type="evidence" value="ECO:0007669"/>
    <property type="project" value="InterPro"/>
</dbReference>
<dbReference type="CDD" id="cd23106">
    <property type="entry name" value="neurotoxins_LC_scorpion"/>
    <property type="match status" value="1"/>
</dbReference>
<dbReference type="Gene3D" id="3.30.30.10">
    <property type="entry name" value="Knottin, scorpion toxin-like"/>
    <property type="match status" value="1"/>
</dbReference>
<dbReference type="InterPro" id="IPR044062">
    <property type="entry name" value="LCN-type_CS_alpha_beta_dom"/>
</dbReference>
<dbReference type="InterPro" id="IPR003614">
    <property type="entry name" value="Scorpion_toxin-like"/>
</dbReference>
<dbReference type="InterPro" id="IPR036574">
    <property type="entry name" value="Scorpion_toxin-like_sf"/>
</dbReference>
<dbReference type="InterPro" id="IPR018218">
    <property type="entry name" value="Scorpion_toxinL"/>
</dbReference>
<dbReference type="InterPro" id="IPR002061">
    <property type="entry name" value="Scorpion_toxinL/defensin"/>
</dbReference>
<dbReference type="Pfam" id="PF00537">
    <property type="entry name" value="Toxin_3"/>
    <property type="match status" value="1"/>
</dbReference>
<dbReference type="PRINTS" id="PR00285">
    <property type="entry name" value="SCORPNTOXIN"/>
</dbReference>
<dbReference type="SMART" id="SM00505">
    <property type="entry name" value="Knot1"/>
    <property type="match status" value="1"/>
</dbReference>
<dbReference type="SUPFAM" id="SSF57095">
    <property type="entry name" value="Scorpion toxin-like"/>
    <property type="match status" value="1"/>
</dbReference>
<dbReference type="PROSITE" id="PS51863">
    <property type="entry name" value="LCN_CSAB"/>
    <property type="match status" value="1"/>
</dbReference>
<accession>F8UWP3</accession>
<sequence length="83" mass="9488">MNYFILILVAALLILDVNCKKDGYPVEHSGCKYTCWKNEYCDKVCKDLKGEGGYCYINLTCWCTGLPDNVPLKTNQRCNGKRK</sequence>
<organism>
    <name type="scientific">Centruroides vittatus</name>
    <name type="common">Striped bark scorpion</name>
    <dbReference type="NCBI Taxonomy" id="120091"/>
    <lineage>
        <taxon>Eukaryota</taxon>
        <taxon>Metazoa</taxon>
        <taxon>Ecdysozoa</taxon>
        <taxon>Arthropoda</taxon>
        <taxon>Chelicerata</taxon>
        <taxon>Arachnida</taxon>
        <taxon>Scorpiones</taxon>
        <taxon>Buthida</taxon>
        <taxon>Buthoidea</taxon>
        <taxon>Buthidae</taxon>
        <taxon>Centruroides</taxon>
    </lineage>
</organism>
<proteinExistence type="evidence at protein level"/>
<comment type="function">
    <text evidence="3">This toxin significantly slows the fast inactivation of Nav1.2/SCN2A (EC(50)=580 nM), Nav1.3/SCN3A (EC(50)=1310 nM), Nav1.4/SCN4A (EC(50)=530 nM), and Nav1.7/SCN9A (EC(50)=1340 nM). The toxin does not affect the peak amplitude of Nav1.7 currents. On all channels cited above, the toxin requires depolarizing potentials to slow channel inactivation. In addition, the toxin has no or very weak effects on the voltage-dependence of steady-state inactivation, and on voltage-dependence of activation. In vivo, it produces paw licking in mice equivalent to the effects of whole venom.</text>
</comment>
<comment type="subcellular location">
    <subcellularLocation>
        <location evidence="3">Secreted</location>
    </subcellularLocation>
</comment>
<comment type="tissue specificity">
    <text evidence="6">Expressed by the venom gland.</text>
</comment>
<comment type="domain">
    <text evidence="5">Has the structural arrangement of an alpha-helix connected to antiparallel beta-sheets by disulfide bonds (CS-alpha/beta).</text>
</comment>
<comment type="mass spectrometry" mass="6904.2" method="MALDI" evidence="3"/>
<comment type="miscellaneous">
    <text evidence="3">Negative results: has a minimal effect on Nav1.5/SCN5A and no effect on Nav1.8/SCN10A and Nav1.9/SCN11A sodium channels.</text>
</comment>
<comment type="similarity">
    <text>Belongs to the long (4 C-C) scorpion toxin superfamily. Sodium channel inhibitor family.</text>
</comment>
<comment type="sequence caution" evidence="5">
    <conflict type="erroneous initiation">
        <sequence resource="EMBL-CDS" id="AEI61921"/>
    </conflict>
    <text>Extended N-terminus.</text>
</comment>
<name>SCX4_CENVT</name>
<evidence type="ECO:0000255" key="1"/>
<evidence type="ECO:0000255" key="2">
    <source>
        <dbReference type="PROSITE-ProRule" id="PRU01210"/>
    </source>
</evidence>
<evidence type="ECO:0000269" key="3">
    <source>
    </source>
</evidence>
<evidence type="ECO:0000303" key="4">
    <source>
    </source>
</evidence>
<evidence type="ECO:0000305" key="5"/>
<evidence type="ECO:0000305" key="6">
    <source>
    </source>
</evidence>